<sequence length="397" mass="43395">MGSNLAGTQCLDSLDFVLQGGAIDDEQLRITPPEDCFDVNFDFISPPVPRTMPDFGIYEFGSEATSGSLEPGPFMPIEHAATSNPAAEKPNPGALVHVSSMQQESVEQMSALNVEIHRQLSVVSQVAKEYATTEPSLMDSTDQRNRLSSAVVSMIQGLQTFQTLLLEILGAARQGSPKEPASRASMHSSQKNDTSLQTSWTWLNTKNDLSSIADADTGDTISDFETGDRQTISRSDTNSEVRPIPESPSQTTWLDMSTSLLIISCYINLIQLCRDVFAAIRGALSVPGHQTTLLELSGFQISGVSIHEDSDLQIIVLTQVVVRLIDRIGLYLGYSGTSTAEAGKRDESDFNCKTISPQLLDFVLGQKEMEGQPSCKERIEALREEIRKLSEVVYKPI</sequence>
<gene>
    <name evidence="3" type="primary">xenB</name>
</gene>
<reference key="1">
    <citation type="journal article" date="2021" name="Acta Pharm. Sin. B (APSB)">
        <title>Tricarbocyclic core formation of tyrosine-decahydrofluorenes implies a three-enzyme cascade with XenF-mediated sigmatropic rearrangement as a prerequisite.</title>
        <authorList>
            <person name="Liu Z."/>
            <person name="Li W."/>
            <person name="Zhang P."/>
            <person name="Fan J."/>
            <person name="Zhang F."/>
            <person name="Wang C."/>
            <person name="Li S."/>
            <person name="Sun Y."/>
            <person name="Chen S."/>
            <person name="Yin W."/>
        </authorList>
    </citation>
    <scope>NUCLEOTIDE SEQUENCE [GENOMIC DNA]</scope>
    <scope>FUNCTION</scope>
    <scope>DISRUPTION PHENOTYPE</scope>
    <scope>PATHWAY</scope>
    <source>
        <strain>ML-31</strain>
    </source>
</reference>
<accession>A0A7L9EZ90</accession>
<comment type="function">
    <text evidence="2">Transcription factor; part of the gene cluster that mediates the biosynthesis of xenoacremones such as xenoacremone A, a compound that shows inhibitory activity toward the PI3K/AKT signaling pathway and which has the ability to induce apoptosis of A549 lung cancer cells (PubMed:34900544). Acts as a positive regulator of the xenoacremones biosynthesis gene cluster (PubMed:34900544).</text>
</comment>
<comment type="disruption phenotype">
    <text evidence="2">Abolishes the production of xenoacremones A and B.</text>
</comment>
<feature type="chain" id="PRO_0000456862" description="Transcription factor xenB">
    <location>
        <begin position="1"/>
        <end position="397"/>
    </location>
</feature>
<feature type="region of interest" description="Disordered" evidence="1">
    <location>
        <begin position="220"/>
        <end position="249"/>
    </location>
</feature>
<feature type="compositionally biased region" description="Polar residues" evidence="1">
    <location>
        <begin position="229"/>
        <end position="240"/>
    </location>
</feature>
<keyword id="KW-0804">Transcription</keyword>
<keyword id="KW-0805">Transcription regulation</keyword>
<dbReference type="EMBL" id="MT876600">
    <property type="protein sequence ID" value="QOJ72660.1"/>
    <property type="molecule type" value="Genomic_DNA"/>
</dbReference>
<name>XENB_XENSI</name>
<evidence type="ECO:0000256" key="1">
    <source>
        <dbReference type="SAM" id="MobiDB-lite"/>
    </source>
</evidence>
<evidence type="ECO:0000269" key="2">
    <source>
    </source>
</evidence>
<evidence type="ECO:0000303" key="3">
    <source>
    </source>
</evidence>
<protein>
    <recommendedName>
        <fullName evidence="3">Transcription factor xenB</fullName>
    </recommendedName>
    <alternativeName>
        <fullName evidence="3">Xenoacremones biosynthesis cluster protein B</fullName>
    </alternativeName>
</protein>
<proteinExistence type="predicted"/>
<organism>
    <name type="scientific">Xenoacremonium sinensis</name>
    <name type="common">Endophyte fungus</name>
    <dbReference type="NCBI Taxonomy" id="2480843"/>
    <lineage>
        <taxon>Eukaryota</taxon>
        <taxon>Fungi</taxon>
        <taxon>Dikarya</taxon>
        <taxon>Ascomycota</taxon>
        <taxon>Pezizomycotina</taxon>
        <taxon>Sordariomycetes</taxon>
        <taxon>Hypocreomycetidae</taxon>
        <taxon>Hypocreales</taxon>
        <taxon>Nectriaceae</taxon>
        <taxon>Xenoacremonium</taxon>
    </lineage>
</organism>